<comment type="function">
    <text evidence="1">Catalyzes the phosphorylation of methylthioribose into methylthioribose-1-phosphate.</text>
</comment>
<comment type="catalytic activity">
    <reaction evidence="1">
        <text>5-(methylsulfanyl)-D-ribose + ATP = 5-(methylsulfanyl)-alpha-D-ribose 1-phosphate + ADP + H(+)</text>
        <dbReference type="Rhea" id="RHEA:22312"/>
        <dbReference type="ChEBI" id="CHEBI:15378"/>
        <dbReference type="ChEBI" id="CHEBI:30616"/>
        <dbReference type="ChEBI" id="CHEBI:58533"/>
        <dbReference type="ChEBI" id="CHEBI:78440"/>
        <dbReference type="ChEBI" id="CHEBI:456216"/>
        <dbReference type="EC" id="2.7.1.100"/>
    </reaction>
</comment>
<comment type="pathway">
    <text evidence="1">Amino-acid biosynthesis; L-methionine biosynthesis via salvage pathway; S-methyl-5-thio-alpha-D-ribose 1-phosphate from S-methyl-5'-thioadenosine (hydrolase route): step 2/2.</text>
</comment>
<comment type="subunit">
    <text evidence="1">Homodimer.</text>
</comment>
<comment type="similarity">
    <text evidence="1">Belongs to the methylthioribose kinase family.</text>
</comment>
<proteinExistence type="inferred from homology"/>
<reference key="1">
    <citation type="submission" date="2008-04" db="EMBL/GenBank/DDBJ databases">
        <title>Complete sequence of Yersinia pseudotuberculosis PB1/+.</title>
        <authorList>
            <person name="Copeland A."/>
            <person name="Lucas S."/>
            <person name="Lapidus A."/>
            <person name="Glavina del Rio T."/>
            <person name="Dalin E."/>
            <person name="Tice H."/>
            <person name="Bruce D."/>
            <person name="Goodwin L."/>
            <person name="Pitluck S."/>
            <person name="Munk A.C."/>
            <person name="Brettin T."/>
            <person name="Detter J.C."/>
            <person name="Han C."/>
            <person name="Tapia R."/>
            <person name="Schmutz J."/>
            <person name="Larimer F."/>
            <person name="Land M."/>
            <person name="Hauser L."/>
            <person name="Challacombe J.F."/>
            <person name="Green L."/>
            <person name="Lindler L.E."/>
            <person name="Nikolich M.P."/>
            <person name="Richardson P."/>
        </authorList>
    </citation>
    <scope>NUCLEOTIDE SEQUENCE [LARGE SCALE GENOMIC DNA]</scope>
    <source>
        <strain>PB1/+</strain>
    </source>
</reference>
<protein>
    <recommendedName>
        <fullName evidence="1">Methylthioribose kinase</fullName>
        <shortName evidence="1">MTR kinase</shortName>
        <ecNumber evidence="1">2.7.1.100</ecNumber>
    </recommendedName>
</protein>
<name>MTNK_YERPB</name>
<organism>
    <name type="scientific">Yersinia pseudotuberculosis serotype IB (strain PB1/+)</name>
    <dbReference type="NCBI Taxonomy" id="502801"/>
    <lineage>
        <taxon>Bacteria</taxon>
        <taxon>Pseudomonadati</taxon>
        <taxon>Pseudomonadota</taxon>
        <taxon>Gammaproteobacteria</taxon>
        <taxon>Enterobacterales</taxon>
        <taxon>Yersiniaceae</taxon>
        <taxon>Yersinia</taxon>
    </lineage>
</organism>
<keyword id="KW-0028">Amino-acid biosynthesis</keyword>
<keyword id="KW-0067">ATP-binding</keyword>
<keyword id="KW-0418">Kinase</keyword>
<keyword id="KW-0486">Methionine biosynthesis</keyword>
<keyword id="KW-0547">Nucleotide-binding</keyword>
<keyword id="KW-0808">Transferase</keyword>
<gene>
    <name evidence="1" type="primary">mtnK</name>
    <name type="ordered locus">YPTS_0919</name>
</gene>
<dbReference type="EC" id="2.7.1.100" evidence="1"/>
<dbReference type="EMBL" id="CP001048">
    <property type="protein sequence ID" value="ACC87900.1"/>
    <property type="molecule type" value="Genomic_DNA"/>
</dbReference>
<dbReference type="RefSeq" id="WP_011191835.1">
    <property type="nucleotide sequence ID" value="NZ_CP009780.1"/>
</dbReference>
<dbReference type="SMR" id="B2K634"/>
<dbReference type="KEGG" id="ypb:YPTS_0919"/>
<dbReference type="PATRIC" id="fig|502801.10.peg.252"/>
<dbReference type="UniPathway" id="UPA00904">
    <property type="reaction ID" value="UER00872"/>
</dbReference>
<dbReference type="GO" id="GO:0005524">
    <property type="term" value="F:ATP binding"/>
    <property type="evidence" value="ECO:0007669"/>
    <property type="project" value="UniProtKB-UniRule"/>
</dbReference>
<dbReference type="GO" id="GO:0046522">
    <property type="term" value="F:S-methyl-5-thioribose kinase activity"/>
    <property type="evidence" value="ECO:0007669"/>
    <property type="project" value="UniProtKB-UniRule"/>
</dbReference>
<dbReference type="GO" id="GO:0019509">
    <property type="term" value="P:L-methionine salvage from methylthioadenosine"/>
    <property type="evidence" value="ECO:0007669"/>
    <property type="project" value="UniProtKB-UniRule"/>
</dbReference>
<dbReference type="Gene3D" id="3.90.1200.10">
    <property type="match status" value="1"/>
</dbReference>
<dbReference type="Gene3D" id="3.30.200.20">
    <property type="entry name" value="Phosphorylase Kinase, domain 1"/>
    <property type="match status" value="1"/>
</dbReference>
<dbReference type="HAMAP" id="MF_01683">
    <property type="entry name" value="Salvage_MtnK"/>
    <property type="match status" value="1"/>
</dbReference>
<dbReference type="InterPro" id="IPR002575">
    <property type="entry name" value="Aminoglycoside_PTrfase"/>
</dbReference>
<dbReference type="InterPro" id="IPR011009">
    <property type="entry name" value="Kinase-like_dom_sf"/>
</dbReference>
<dbReference type="InterPro" id="IPR009212">
    <property type="entry name" value="Methylthioribose_kinase"/>
</dbReference>
<dbReference type="NCBIfam" id="TIGR01767">
    <property type="entry name" value="MTRK"/>
    <property type="match status" value="1"/>
</dbReference>
<dbReference type="PANTHER" id="PTHR34273">
    <property type="entry name" value="METHYLTHIORIBOSE KINASE"/>
    <property type="match status" value="1"/>
</dbReference>
<dbReference type="PANTHER" id="PTHR34273:SF2">
    <property type="entry name" value="METHYLTHIORIBOSE KINASE"/>
    <property type="match status" value="1"/>
</dbReference>
<dbReference type="Pfam" id="PF01636">
    <property type="entry name" value="APH"/>
    <property type="match status" value="1"/>
</dbReference>
<dbReference type="PIRSF" id="PIRSF031134">
    <property type="entry name" value="MTRK"/>
    <property type="match status" value="1"/>
</dbReference>
<dbReference type="SUPFAM" id="SSF56112">
    <property type="entry name" value="Protein kinase-like (PK-like)"/>
    <property type="match status" value="1"/>
</dbReference>
<feature type="chain" id="PRO_0000357353" description="Methylthioribose kinase">
    <location>
        <begin position="1"/>
        <end position="407"/>
    </location>
</feature>
<feature type="binding site" evidence="1">
    <location>
        <position position="40"/>
    </location>
    <ligand>
        <name>ATP</name>
        <dbReference type="ChEBI" id="CHEBI:30616"/>
    </ligand>
</feature>
<feature type="binding site" evidence="1">
    <location>
        <position position="57"/>
    </location>
    <ligand>
        <name>ATP</name>
        <dbReference type="ChEBI" id="CHEBI:30616"/>
    </ligand>
</feature>
<feature type="binding site" evidence="1">
    <location>
        <begin position="111"/>
        <end position="113"/>
    </location>
    <ligand>
        <name>ATP</name>
        <dbReference type="ChEBI" id="CHEBI:30616"/>
    </ligand>
</feature>
<feature type="binding site" evidence="1">
    <location>
        <position position="229"/>
    </location>
    <ligand>
        <name>substrate</name>
    </ligand>
</feature>
<feature type="binding site" evidence="1">
    <location>
        <begin position="246"/>
        <end position="248"/>
    </location>
    <ligand>
        <name>ATP</name>
        <dbReference type="ChEBI" id="CHEBI:30616"/>
    </ligand>
</feature>
<feature type="binding site" evidence="1">
    <location>
        <position position="344"/>
    </location>
    <ligand>
        <name>substrate</name>
    </ligand>
</feature>
<sequence>MSRYHTFTAADAVEYARQFGQVADPQALVTADEIGDGNLNLVFKIRDTAGISRVIVKQALPYVRCVGESWPLTLDRARIEAETLLTHSQFCPQHTVKVLHHDAELAVMVQEDLSDHHIWRHELIQGNYYPQAAEQLGEYLAQTLFHTSDFYQSAQAKKAAVSRYTNPELCQITEDLFFTDPYIDHERNNFDPVLLPEVLSLRQDKALKLAVASLKHRFLSQAEALLHGDIHSGSIFVADGRLKTIDAEFGFYGPIGFDIGTALGNLLLNYCGLPGLAGPRDAAAGREQRLKDVQTVWQTFAARFLALSQEKTQDPALATEGYATQFLQHVWRDAIGYCGSELIRRTIGLAHVADLDSIDDEEMRRACQRHALSLGRALILVAPHVDDVGGVVARIRQSPSSLTPQRC</sequence>
<evidence type="ECO:0000255" key="1">
    <source>
        <dbReference type="HAMAP-Rule" id="MF_01683"/>
    </source>
</evidence>
<accession>B2K634</accession>